<reference key="1">
    <citation type="journal article" date="2010" name="ISME J.">
        <title>The complete genome sequence of the algal symbiont Dinoroseobacter shibae: a hitchhiker's guide to life in the sea.</title>
        <authorList>
            <person name="Wagner-Dobler I."/>
            <person name="Ballhausen B."/>
            <person name="Berger M."/>
            <person name="Brinkhoff T."/>
            <person name="Buchholz I."/>
            <person name="Bunk B."/>
            <person name="Cypionka H."/>
            <person name="Daniel R."/>
            <person name="Drepper T."/>
            <person name="Gerdts G."/>
            <person name="Hahnke S."/>
            <person name="Han C."/>
            <person name="Jahn D."/>
            <person name="Kalhoefer D."/>
            <person name="Kiss H."/>
            <person name="Klenk H.P."/>
            <person name="Kyrpides N."/>
            <person name="Liebl W."/>
            <person name="Liesegang H."/>
            <person name="Meincke L."/>
            <person name="Pati A."/>
            <person name="Petersen J."/>
            <person name="Piekarski T."/>
            <person name="Pommerenke C."/>
            <person name="Pradella S."/>
            <person name="Pukall R."/>
            <person name="Rabus R."/>
            <person name="Stackebrandt E."/>
            <person name="Thole S."/>
            <person name="Thompson L."/>
            <person name="Tielen P."/>
            <person name="Tomasch J."/>
            <person name="von Jan M."/>
            <person name="Wanphrut N."/>
            <person name="Wichels A."/>
            <person name="Zech H."/>
            <person name="Simon M."/>
        </authorList>
    </citation>
    <scope>NUCLEOTIDE SEQUENCE [LARGE SCALE GENOMIC DNA]</scope>
    <source>
        <strain>DSM 16493 / NCIMB 14021 / DFL 12</strain>
    </source>
</reference>
<keyword id="KW-0012">Acyltransferase</keyword>
<keyword id="KW-0963">Cytoplasm</keyword>
<keyword id="KW-0275">Fatty acid biosynthesis</keyword>
<keyword id="KW-0276">Fatty acid metabolism</keyword>
<keyword id="KW-0444">Lipid biosynthesis</keyword>
<keyword id="KW-0443">Lipid metabolism</keyword>
<keyword id="KW-0511">Multifunctional enzyme</keyword>
<keyword id="KW-1185">Reference proteome</keyword>
<keyword id="KW-0808">Transferase</keyword>
<protein>
    <recommendedName>
        <fullName evidence="1">Beta-ketoacyl-[acyl-carrier-protein] synthase III</fullName>
        <shortName evidence="1">Beta-ketoacyl-ACP synthase III</shortName>
        <shortName evidence="1">KAS III</shortName>
        <ecNumber evidence="1">2.3.1.180</ecNumber>
    </recommendedName>
    <alternativeName>
        <fullName evidence="1">3-oxoacyl-[acyl-carrier-protein] synthase 3</fullName>
    </alternativeName>
    <alternativeName>
        <fullName evidence="1">3-oxoacyl-[acyl-carrier-protein] synthase III</fullName>
    </alternativeName>
</protein>
<accession>A8LLT4</accession>
<evidence type="ECO:0000255" key="1">
    <source>
        <dbReference type="HAMAP-Rule" id="MF_01815"/>
    </source>
</evidence>
<name>FABH_DINSH</name>
<sequence>MGKRAVVTGVGHYLPSRVVPNSELETLVDTTDEWIRTRSGIERRHFAADGEQTSDLATAAAQAALDHAELTAQDVDAVIVATSTPDLTFPAVATMVQARLGMTRGFAYDVQAVCAGFVFAMANANAMILSGQADRILVIGAETFSRIMDWTDRSTCVLFGDGAGAVVLEARDGTGGTADRGILSADLNSDGRHRDILYVDGGVSSSQTAGYLRMEGKEVFRHAIEKLAATAETALAKAGLTEADVDWVVPHQANLRIITATARKMGIGMDRVVVTVADHGNTSAASIPMALSVGVARGQIKPGDLVVTEAIGGGLSWGSVVLRW</sequence>
<organism>
    <name type="scientific">Dinoroseobacter shibae (strain DSM 16493 / NCIMB 14021 / DFL 12)</name>
    <dbReference type="NCBI Taxonomy" id="398580"/>
    <lineage>
        <taxon>Bacteria</taxon>
        <taxon>Pseudomonadati</taxon>
        <taxon>Pseudomonadota</taxon>
        <taxon>Alphaproteobacteria</taxon>
        <taxon>Rhodobacterales</taxon>
        <taxon>Roseobacteraceae</taxon>
        <taxon>Dinoroseobacter</taxon>
    </lineage>
</organism>
<feature type="chain" id="PRO_1000088311" description="Beta-ketoacyl-[acyl-carrier-protein] synthase III">
    <location>
        <begin position="1"/>
        <end position="324"/>
    </location>
</feature>
<feature type="region of interest" description="ACP-binding" evidence="1">
    <location>
        <begin position="252"/>
        <end position="256"/>
    </location>
</feature>
<feature type="active site" evidence="1">
    <location>
        <position position="114"/>
    </location>
</feature>
<feature type="active site" evidence="1">
    <location>
        <position position="251"/>
    </location>
</feature>
<feature type="active site" evidence="1">
    <location>
        <position position="281"/>
    </location>
</feature>
<proteinExistence type="inferred from homology"/>
<comment type="function">
    <text evidence="1">Catalyzes the condensation reaction of fatty acid synthesis by the addition to an acyl acceptor of two carbons from malonyl-ACP. Catalyzes the first condensation reaction which initiates fatty acid synthesis and may therefore play a role in governing the total rate of fatty acid production. Possesses both acetoacetyl-ACP synthase and acetyl transacylase activities. Its substrate specificity determines the biosynthesis of branched-chain and/or straight-chain of fatty acids.</text>
</comment>
<comment type="catalytic activity">
    <reaction evidence="1">
        <text>malonyl-[ACP] + acetyl-CoA + H(+) = 3-oxobutanoyl-[ACP] + CO2 + CoA</text>
        <dbReference type="Rhea" id="RHEA:12080"/>
        <dbReference type="Rhea" id="RHEA-COMP:9623"/>
        <dbReference type="Rhea" id="RHEA-COMP:9625"/>
        <dbReference type="ChEBI" id="CHEBI:15378"/>
        <dbReference type="ChEBI" id="CHEBI:16526"/>
        <dbReference type="ChEBI" id="CHEBI:57287"/>
        <dbReference type="ChEBI" id="CHEBI:57288"/>
        <dbReference type="ChEBI" id="CHEBI:78449"/>
        <dbReference type="ChEBI" id="CHEBI:78450"/>
        <dbReference type="EC" id="2.3.1.180"/>
    </reaction>
</comment>
<comment type="pathway">
    <text evidence="1">Lipid metabolism; fatty acid biosynthesis.</text>
</comment>
<comment type="subunit">
    <text evidence="1">Homodimer.</text>
</comment>
<comment type="subcellular location">
    <subcellularLocation>
        <location evidence="1">Cytoplasm</location>
    </subcellularLocation>
</comment>
<comment type="domain">
    <text evidence="1">The last Arg residue of the ACP-binding site is essential for the weak association between ACP/AcpP and FabH.</text>
</comment>
<comment type="similarity">
    <text evidence="1">Belongs to the thiolase-like superfamily. FabH family.</text>
</comment>
<dbReference type="EC" id="2.3.1.180" evidence="1"/>
<dbReference type="EMBL" id="CP000830">
    <property type="protein sequence ID" value="ABV93462.1"/>
    <property type="molecule type" value="Genomic_DNA"/>
</dbReference>
<dbReference type="RefSeq" id="WP_012178392.1">
    <property type="nucleotide sequence ID" value="NC_009952.1"/>
</dbReference>
<dbReference type="SMR" id="A8LLT4"/>
<dbReference type="STRING" id="398580.Dshi_1720"/>
<dbReference type="KEGG" id="dsh:Dshi_1720"/>
<dbReference type="eggNOG" id="COG0332">
    <property type="taxonomic scope" value="Bacteria"/>
</dbReference>
<dbReference type="HOGENOM" id="CLU_039592_3_1_5"/>
<dbReference type="OrthoDB" id="9815506at2"/>
<dbReference type="UniPathway" id="UPA00094"/>
<dbReference type="Proteomes" id="UP000006833">
    <property type="component" value="Chromosome"/>
</dbReference>
<dbReference type="GO" id="GO:0005737">
    <property type="term" value="C:cytoplasm"/>
    <property type="evidence" value="ECO:0007669"/>
    <property type="project" value="UniProtKB-SubCell"/>
</dbReference>
<dbReference type="GO" id="GO:0004315">
    <property type="term" value="F:3-oxoacyl-[acyl-carrier-protein] synthase activity"/>
    <property type="evidence" value="ECO:0007669"/>
    <property type="project" value="InterPro"/>
</dbReference>
<dbReference type="GO" id="GO:0033818">
    <property type="term" value="F:beta-ketoacyl-acyl-carrier-protein synthase III activity"/>
    <property type="evidence" value="ECO:0007669"/>
    <property type="project" value="UniProtKB-UniRule"/>
</dbReference>
<dbReference type="GO" id="GO:0006633">
    <property type="term" value="P:fatty acid biosynthetic process"/>
    <property type="evidence" value="ECO:0007669"/>
    <property type="project" value="UniProtKB-UniRule"/>
</dbReference>
<dbReference type="GO" id="GO:0044550">
    <property type="term" value="P:secondary metabolite biosynthetic process"/>
    <property type="evidence" value="ECO:0007669"/>
    <property type="project" value="TreeGrafter"/>
</dbReference>
<dbReference type="CDD" id="cd00830">
    <property type="entry name" value="KAS_III"/>
    <property type="match status" value="1"/>
</dbReference>
<dbReference type="FunFam" id="3.40.47.10:FF:000004">
    <property type="entry name" value="3-oxoacyl-[acyl-carrier-protein] synthase 3"/>
    <property type="match status" value="1"/>
</dbReference>
<dbReference type="Gene3D" id="3.40.47.10">
    <property type="match status" value="1"/>
</dbReference>
<dbReference type="HAMAP" id="MF_01815">
    <property type="entry name" value="FabH"/>
    <property type="match status" value="1"/>
</dbReference>
<dbReference type="InterPro" id="IPR013747">
    <property type="entry name" value="ACP_syn_III_C"/>
</dbReference>
<dbReference type="InterPro" id="IPR013751">
    <property type="entry name" value="ACP_syn_III_N"/>
</dbReference>
<dbReference type="InterPro" id="IPR004655">
    <property type="entry name" value="FabH"/>
</dbReference>
<dbReference type="InterPro" id="IPR016039">
    <property type="entry name" value="Thiolase-like"/>
</dbReference>
<dbReference type="NCBIfam" id="TIGR00747">
    <property type="entry name" value="fabH"/>
    <property type="match status" value="1"/>
</dbReference>
<dbReference type="NCBIfam" id="NF006829">
    <property type="entry name" value="PRK09352.1"/>
    <property type="match status" value="1"/>
</dbReference>
<dbReference type="PANTHER" id="PTHR34069">
    <property type="entry name" value="3-OXOACYL-[ACYL-CARRIER-PROTEIN] SYNTHASE 3"/>
    <property type="match status" value="1"/>
</dbReference>
<dbReference type="PANTHER" id="PTHR34069:SF2">
    <property type="entry name" value="BETA-KETOACYL-[ACYL-CARRIER-PROTEIN] SYNTHASE III"/>
    <property type="match status" value="1"/>
</dbReference>
<dbReference type="Pfam" id="PF08545">
    <property type="entry name" value="ACP_syn_III"/>
    <property type="match status" value="1"/>
</dbReference>
<dbReference type="Pfam" id="PF08541">
    <property type="entry name" value="ACP_syn_III_C"/>
    <property type="match status" value="1"/>
</dbReference>
<dbReference type="SUPFAM" id="SSF53901">
    <property type="entry name" value="Thiolase-like"/>
    <property type="match status" value="1"/>
</dbReference>
<gene>
    <name evidence="1" type="primary">fabH</name>
    <name type="ordered locus">Dshi_1720</name>
</gene>